<organism>
    <name type="scientific">Pseudomonas aeruginosa (strain UCBPP-PA14)</name>
    <dbReference type="NCBI Taxonomy" id="208963"/>
    <lineage>
        <taxon>Bacteria</taxon>
        <taxon>Pseudomonadati</taxon>
        <taxon>Pseudomonadota</taxon>
        <taxon>Gammaproteobacteria</taxon>
        <taxon>Pseudomonadales</taxon>
        <taxon>Pseudomonadaceae</taxon>
        <taxon>Pseudomonas</taxon>
    </lineage>
</organism>
<accession>Q02FF2</accession>
<name>URE2_PSEAB</name>
<dbReference type="EC" id="3.5.1.5" evidence="1"/>
<dbReference type="EMBL" id="CP000438">
    <property type="protein sequence ID" value="ABJ14251.1"/>
    <property type="molecule type" value="Genomic_DNA"/>
</dbReference>
<dbReference type="RefSeq" id="WP_003095450.1">
    <property type="nucleotide sequence ID" value="NZ_CP034244.1"/>
</dbReference>
<dbReference type="SMR" id="Q02FF2"/>
<dbReference type="KEGG" id="pau:PA14_64370"/>
<dbReference type="PseudoCAP" id="PA14_64370"/>
<dbReference type="HOGENOM" id="CLU_129707_1_1_6"/>
<dbReference type="BioCyc" id="PAER208963:G1G74-5438-MONOMER"/>
<dbReference type="UniPathway" id="UPA00258">
    <property type="reaction ID" value="UER00370"/>
</dbReference>
<dbReference type="Proteomes" id="UP000000653">
    <property type="component" value="Chromosome"/>
</dbReference>
<dbReference type="GO" id="GO:0035550">
    <property type="term" value="C:urease complex"/>
    <property type="evidence" value="ECO:0007669"/>
    <property type="project" value="InterPro"/>
</dbReference>
<dbReference type="GO" id="GO:0009039">
    <property type="term" value="F:urease activity"/>
    <property type="evidence" value="ECO:0007669"/>
    <property type="project" value="UniProtKB-UniRule"/>
</dbReference>
<dbReference type="GO" id="GO:0043419">
    <property type="term" value="P:urea catabolic process"/>
    <property type="evidence" value="ECO:0007669"/>
    <property type="project" value="UniProtKB-UniRule"/>
</dbReference>
<dbReference type="CDD" id="cd00407">
    <property type="entry name" value="Urease_beta"/>
    <property type="match status" value="1"/>
</dbReference>
<dbReference type="FunFam" id="2.10.150.10:FF:000001">
    <property type="entry name" value="Urease subunit beta"/>
    <property type="match status" value="1"/>
</dbReference>
<dbReference type="Gene3D" id="2.10.150.10">
    <property type="entry name" value="Urease, beta subunit"/>
    <property type="match status" value="1"/>
</dbReference>
<dbReference type="HAMAP" id="MF_01954">
    <property type="entry name" value="Urease_beta"/>
    <property type="match status" value="1"/>
</dbReference>
<dbReference type="InterPro" id="IPR002019">
    <property type="entry name" value="Urease_beta-like"/>
</dbReference>
<dbReference type="InterPro" id="IPR036461">
    <property type="entry name" value="Urease_betasu_sf"/>
</dbReference>
<dbReference type="InterPro" id="IPR050069">
    <property type="entry name" value="Urease_subunit"/>
</dbReference>
<dbReference type="NCBIfam" id="NF009682">
    <property type="entry name" value="PRK13203.1"/>
    <property type="match status" value="1"/>
</dbReference>
<dbReference type="NCBIfam" id="TIGR00192">
    <property type="entry name" value="urease_beta"/>
    <property type="match status" value="1"/>
</dbReference>
<dbReference type="PANTHER" id="PTHR33569">
    <property type="entry name" value="UREASE"/>
    <property type="match status" value="1"/>
</dbReference>
<dbReference type="PANTHER" id="PTHR33569:SF1">
    <property type="entry name" value="UREASE"/>
    <property type="match status" value="1"/>
</dbReference>
<dbReference type="Pfam" id="PF00699">
    <property type="entry name" value="Urease_beta"/>
    <property type="match status" value="1"/>
</dbReference>
<dbReference type="SUPFAM" id="SSF51278">
    <property type="entry name" value="Urease, beta-subunit"/>
    <property type="match status" value="1"/>
</dbReference>
<feature type="chain" id="PRO_1000070759" description="Urease subunit beta">
    <location>
        <begin position="1"/>
        <end position="101"/>
    </location>
</feature>
<proteinExistence type="inferred from homology"/>
<gene>
    <name evidence="1" type="primary">ureB</name>
    <name type="ordered locus">PA14_64370</name>
</gene>
<comment type="catalytic activity">
    <reaction evidence="1">
        <text>urea + 2 H2O + H(+) = hydrogencarbonate + 2 NH4(+)</text>
        <dbReference type="Rhea" id="RHEA:20557"/>
        <dbReference type="ChEBI" id="CHEBI:15377"/>
        <dbReference type="ChEBI" id="CHEBI:15378"/>
        <dbReference type="ChEBI" id="CHEBI:16199"/>
        <dbReference type="ChEBI" id="CHEBI:17544"/>
        <dbReference type="ChEBI" id="CHEBI:28938"/>
        <dbReference type="EC" id="3.5.1.5"/>
    </reaction>
</comment>
<comment type="pathway">
    <text evidence="1">Nitrogen metabolism; urea degradation; CO(2) and NH(3) from urea (urease route): step 1/1.</text>
</comment>
<comment type="subunit">
    <text evidence="1">Heterotrimer of UreA (gamma), UreB (beta) and UreC (alpha) subunits. Three heterotrimers associate to form the active enzyme.</text>
</comment>
<comment type="subcellular location">
    <subcellularLocation>
        <location evidence="1">Cytoplasm</location>
    </subcellularLocation>
</comment>
<comment type="similarity">
    <text evidence="1">Belongs to the urease beta subunit family.</text>
</comment>
<keyword id="KW-0963">Cytoplasm</keyword>
<keyword id="KW-0378">Hydrolase</keyword>
<sequence length="101" mass="10989">MIPGEYDIQPGDIELNAGRRTLALSVANTGDRPIQVGSHYHFFEVNDALAFDRPATRGMRLNIAAGTAVRFEPGQSREVELVEIGGGRRVYGFAGRVMGDL</sequence>
<evidence type="ECO:0000255" key="1">
    <source>
        <dbReference type="HAMAP-Rule" id="MF_01954"/>
    </source>
</evidence>
<reference key="1">
    <citation type="journal article" date="2006" name="Genome Biol.">
        <title>Genomic analysis reveals that Pseudomonas aeruginosa virulence is combinatorial.</title>
        <authorList>
            <person name="Lee D.G."/>
            <person name="Urbach J.M."/>
            <person name="Wu G."/>
            <person name="Liberati N.T."/>
            <person name="Feinbaum R.L."/>
            <person name="Miyata S."/>
            <person name="Diggins L.T."/>
            <person name="He J."/>
            <person name="Saucier M."/>
            <person name="Deziel E."/>
            <person name="Friedman L."/>
            <person name="Li L."/>
            <person name="Grills G."/>
            <person name="Montgomery K."/>
            <person name="Kucherlapati R."/>
            <person name="Rahme L.G."/>
            <person name="Ausubel F.M."/>
        </authorList>
    </citation>
    <scope>NUCLEOTIDE SEQUENCE [LARGE SCALE GENOMIC DNA]</scope>
    <source>
        <strain>UCBPP-PA14</strain>
    </source>
</reference>
<protein>
    <recommendedName>
        <fullName evidence="1">Urease subunit beta</fullName>
        <ecNumber evidence="1">3.5.1.5</ecNumber>
    </recommendedName>
    <alternativeName>
        <fullName evidence="1">Urea amidohydrolase subunit beta</fullName>
    </alternativeName>
</protein>